<keyword id="KW-1185">Reference proteome</keyword>
<keyword id="KW-0677">Repeat</keyword>
<comment type="similarity">
    <text evidence="1">Belongs to the PPR family. PCMP-E subfamily.</text>
</comment>
<comment type="online information" name="Pentatricopeptide repeat proteins">
    <link uri="https://ppr.plantenergy.uwa.edu.au"/>
</comment>
<evidence type="ECO:0000305" key="1"/>
<reference key="1">
    <citation type="journal article" date="2000" name="Nature">
        <title>Sequence and analysis of chromosome 3 of the plant Arabidopsis thaliana.</title>
        <authorList>
            <person name="Salanoubat M."/>
            <person name="Lemcke K."/>
            <person name="Rieger M."/>
            <person name="Ansorge W."/>
            <person name="Unseld M."/>
            <person name="Fartmann B."/>
            <person name="Valle G."/>
            <person name="Bloecker H."/>
            <person name="Perez-Alonso M."/>
            <person name="Obermaier B."/>
            <person name="Delseny M."/>
            <person name="Boutry M."/>
            <person name="Grivell L.A."/>
            <person name="Mache R."/>
            <person name="Puigdomenech P."/>
            <person name="De Simone V."/>
            <person name="Choisne N."/>
            <person name="Artiguenave F."/>
            <person name="Robert C."/>
            <person name="Brottier P."/>
            <person name="Wincker P."/>
            <person name="Cattolico L."/>
            <person name="Weissenbach J."/>
            <person name="Saurin W."/>
            <person name="Quetier F."/>
            <person name="Schaefer M."/>
            <person name="Mueller-Auer S."/>
            <person name="Gabel C."/>
            <person name="Fuchs M."/>
            <person name="Benes V."/>
            <person name="Wurmbach E."/>
            <person name="Drzonek H."/>
            <person name="Erfle H."/>
            <person name="Jordan N."/>
            <person name="Bangert S."/>
            <person name="Wiedelmann R."/>
            <person name="Kranz H."/>
            <person name="Voss H."/>
            <person name="Holland R."/>
            <person name="Brandt P."/>
            <person name="Nyakatura G."/>
            <person name="Vezzi A."/>
            <person name="D'Angelo M."/>
            <person name="Pallavicini A."/>
            <person name="Toppo S."/>
            <person name="Simionati B."/>
            <person name="Conrad A."/>
            <person name="Hornischer K."/>
            <person name="Kauer G."/>
            <person name="Loehnert T.-H."/>
            <person name="Nordsiek G."/>
            <person name="Reichelt J."/>
            <person name="Scharfe M."/>
            <person name="Schoen O."/>
            <person name="Bargues M."/>
            <person name="Terol J."/>
            <person name="Climent J."/>
            <person name="Navarro P."/>
            <person name="Collado C."/>
            <person name="Perez-Perez A."/>
            <person name="Ottenwaelder B."/>
            <person name="Duchemin D."/>
            <person name="Cooke R."/>
            <person name="Laudie M."/>
            <person name="Berger-Llauro C."/>
            <person name="Purnelle B."/>
            <person name="Masuy D."/>
            <person name="de Haan M."/>
            <person name="Maarse A.C."/>
            <person name="Alcaraz J.-P."/>
            <person name="Cottet A."/>
            <person name="Casacuberta E."/>
            <person name="Monfort A."/>
            <person name="Argiriou A."/>
            <person name="Flores M."/>
            <person name="Liguori R."/>
            <person name="Vitale D."/>
            <person name="Mannhaupt G."/>
            <person name="Haase D."/>
            <person name="Schoof H."/>
            <person name="Rudd S."/>
            <person name="Zaccaria P."/>
            <person name="Mewes H.-W."/>
            <person name="Mayer K.F.X."/>
            <person name="Kaul S."/>
            <person name="Town C.D."/>
            <person name="Koo H.L."/>
            <person name="Tallon L.J."/>
            <person name="Jenkins J."/>
            <person name="Rooney T."/>
            <person name="Rizzo M."/>
            <person name="Walts A."/>
            <person name="Utterback T."/>
            <person name="Fujii C.Y."/>
            <person name="Shea T.P."/>
            <person name="Creasy T.H."/>
            <person name="Haas B."/>
            <person name="Maiti R."/>
            <person name="Wu D."/>
            <person name="Peterson J."/>
            <person name="Van Aken S."/>
            <person name="Pai G."/>
            <person name="Militscher J."/>
            <person name="Sellers P."/>
            <person name="Gill J.E."/>
            <person name="Feldblyum T.V."/>
            <person name="Preuss D."/>
            <person name="Lin X."/>
            <person name="Nierman W.C."/>
            <person name="Salzberg S.L."/>
            <person name="White O."/>
            <person name="Venter J.C."/>
            <person name="Fraser C.M."/>
            <person name="Kaneko T."/>
            <person name="Nakamura Y."/>
            <person name="Sato S."/>
            <person name="Kato T."/>
            <person name="Asamizu E."/>
            <person name="Sasamoto S."/>
            <person name="Kimura T."/>
            <person name="Idesawa K."/>
            <person name="Kawashima K."/>
            <person name="Kishida Y."/>
            <person name="Kiyokawa C."/>
            <person name="Kohara M."/>
            <person name="Matsumoto M."/>
            <person name="Matsuno A."/>
            <person name="Muraki A."/>
            <person name="Nakayama S."/>
            <person name="Nakazaki N."/>
            <person name="Shinpo S."/>
            <person name="Takeuchi C."/>
            <person name="Wada T."/>
            <person name="Watanabe A."/>
            <person name="Yamada M."/>
            <person name="Yasuda M."/>
            <person name="Tabata S."/>
        </authorList>
    </citation>
    <scope>NUCLEOTIDE SEQUENCE [LARGE SCALE GENOMIC DNA]</scope>
    <source>
        <strain>cv. Columbia</strain>
    </source>
</reference>
<reference key="2">
    <citation type="journal article" date="2017" name="Plant J.">
        <title>Araport11: a complete reannotation of the Arabidopsis thaliana reference genome.</title>
        <authorList>
            <person name="Cheng C.Y."/>
            <person name="Krishnakumar V."/>
            <person name="Chan A.P."/>
            <person name="Thibaud-Nissen F."/>
            <person name="Schobel S."/>
            <person name="Town C.D."/>
        </authorList>
    </citation>
    <scope>GENOME REANNOTATION</scope>
    <source>
        <strain>cv. Columbia</strain>
    </source>
</reference>
<reference key="3">
    <citation type="journal article" date="2004" name="Plant Cell">
        <title>Genome-wide analysis of Arabidopsis pentatricopeptide repeat proteins reveals their essential role in organelle biogenesis.</title>
        <authorList>
            <person name="Lurin C."/>
            <person name="Andres C."/>
            <person name="Aubourg S."/>
            <person name="Bellaoui M."/>
            <person name="Bitton F."/>
            <person name="Bruyere C."/>
            <person name="Caboche M."/>
            <person name="Debast C."/>
            <person name="Gualberto J."/>
            <person name="Hoffmann B."/>
            <person name="Lecharny A."/>
            <person name="Le Ret M."/>
            <person name="Martin-Magniette M.-L."/>
            <person name="Mireau H."/>
            <person name="Peeters N."/>
            <person name="Renou J.-P."/>
            <person name="Szurek B."/>
            <person name="Taconnat L."/>
            <person name="Small I."/>
        </authorList>
    </citation>
    <scope>GENE FAMILY</scope>
</reference>
<dbReference type="EMBL" id="AL132965">
    <property type="protein sequence ID" value="CAB66912.1"/>
    <property type="molecule type" value="Genomic_DNA"/>
</dbReference>
<dbReference type="EMBL" id="CP002686">
    <property type="protein sequence ID" value="AEE78584.1"/>
    <property type="molecule type" value="Genomic_DNA"/>
</dbReference>
<dbReference type="PIR" id="T46040">
    <property type="entry name" value="T46040"/>
</dbReference>
<dbReference type="RefSeq" id="NP_190543.1">
    <property type="nucleotide sequence ID" value="NM_114834.3"/>
</dbReference>
<dbReference type="SMR" id="Q9M2Y4"/>
<dbReference type="PaxDb" id="3702-AT3G49740.1"/>
<dbReference type="EnsemblPlants" id="AT3G49740.1">
    <property type="protein sequence ID" value="AT3G49740.1"/>
    <property type="gene ID" value="AT3G49740"/>
</dbReference>
<dbReference type="GeneID" id="824136"/>
<dbReference type="Gramene" id="AT3G49740.1">
    <property type="protein sequence ID" value="AT3G49740.1"/>
    <property type="gene ID" value="AT3G49740"/>
</dbReference>
<dbReference type="KEGG" id="ath:AT3G49740"/>
<dbReference type="Araport" id="AT3G49740"/>
<dbReference type="TAIR" id="AT3G49740"/>
<dbReference type="eggNOG" id="KOG4197">
    <property type="taxonomic scope" value="Eukaryota"/>
</dbReference>
<dbReference type="HOGENOM" id="CLU_002706_15_10_1"/>
<dbReference type="InParanoid" id="Q9M2Y4"/>
<dbReference type="OMA" id="SCAAYGN"/>
<dbReference type="PhylomeDB" id="Q9M2Y4"/>
<dbReference type="PRO" id="PR:Q9M2Y4"/>
<dbReference type="Proteomes" id="UP000006548">
    <property type="component" value="Chromosome 3"/>
</dbReference>
<dbReference type="ExpressionAtlas" id="Q9M2Y4">
    <property type="expression patterns" value="differential"/>
</dbReference>
<dbReference type="GO" id="GO:0003723">
    <property type="term" value="F:RNA binding"/>
    <property type="evidence" value="ECO:0007669"/>
    <property type="project" value="InterPro"/>
</dbReference>
<dbReference type="GO" id="GO:0009451">
    <property type="term" value="P:RNA modification"/>
    <property type="evidence" value="ECO:0007669"/>
    <property type="project" value="InterPro"/>
</dbReference>
<dbReference type="FunFam" id="1.25.40.10:FF:001174">
    <property type="entry name" value="Pentatricopeptide repeat-containing protein At3g49740"/>
    <property type="match status" value="1"/>
</dbReference>
<dbReference type="FunFam" id="1.25.40.10:FF:000196">
    <property type="entry name" value="Pentatricopeptide repeat-containing protein At4g14850"/>
    <property type="match status" value="1"/>
</dbReference>
<dbReference type="FunFam" id="1.25.40.10:FF:000090">
    <property type="entry name" value="Pentatricopeptide repeat-containing protein, chloroplastic"/>
    <property type="match status" value="1"/>
</dbReference>
<dbReference type="Gene3D" id="1.25.40.10">
    <property type="entry name" value="Tetratricopeptide repeat domain"/>
    <property type="match status" value="5"/>
</dbReference>
<dbReference type="InterPro" id="IPR046848">
    <property type="entry name" value="E_motif"/>
</dbReference>
<dbReference type="InterPro" id="IPR002885">
    <property type="entry name" value="Pentatricopeptide_rpt"/>
</dbReference>
<dbReference type="InterPro" id="IPR046960">
    <property type="entry name" value="PPR_At4g14850-like_plant"/>
</dbReference>
<dbReference type="InterPro" id="IPR011990">
    <property type="entry name" value="TPR-like_helical_dom_sf"/>
</dbReference>
<dbReference type="NCBIfam" id="TIGR00756">
    <property type="entry name" value="PPR"/>
    <property type="match status" value="6"/>
</dbReference>
<dbReference type="PANTHER" id="PTHR47926">
    <property type="entry name" value="PENTATRICOPEPTIDE REPEAT-CONTAINING PROTEIN"/>
    <property type="match status" value="1"/>
</dbReference>
<dbReference type="PANTHER" id="PTHR47926:SF342">
    <property type="entry name" value="TETRATRICOPEPTIDE-LIKE HELICAL DOMAIN-CONTAINING PROTEIN-RELATED"/>
    <property type="match status" value="1"/>
</dbReference>
<dbReference type="Pfam" id="PF20431">
    <property type="entry name" value="E_motif"/>
    <property type="match status" value="1"/>
</dbReference>
<dbReference type="Pfam" id="PF01535">
    <property type="entry name" value="PPR"/>
    <property type="match status" value="4"/>
</dbReference>
<dbReference type="Pfam" id="PF12854">
    <property type="entry name" value="PPR_1"/>
    <property type="match status" value="1"/>
</dbReference>
<dbReference type="Pfam" id="PF13041">
    <property type="entry name" value="PPR_2"/>
    <property type="match status" value="2"/>
</dbReference>
<dbReference type="SUPFAM" id="SSF48452">
    <property type="entry name" value="TPR-like"/>
    <property type="match status" value="1"/>
</dbReference>
<dbReference type="PROSITE" id="PS51375">
    <property type="entry name" value="PPR"/>
    <property type="match status" value="10"/>
</dbReference>
<organism>
    <name type="scientific">Arabidopsis thaliana</name>
    <name type="common">Mouse-ear cress</name>
    <dbReference type="NCBI Taxonomy" id="3702"/>
    <lineage>
        <taxon>Eukaryota</taxon>
        <taxon>Viridiplantae</taxon>
        <taxon>Streptophyta</taxon>
        <taxon>Embryophyta</taxon>
        <taxon>Tracheophyta</taxon>
        <taxon>Spermatophyta</taxon>
        <taxon>Magnoliopsida</taxon>
        <taxon>eudicotyledons</taxon>
        <taxon>Gunneridae</taxon>
        <taxon>Pentapetalae</taxon>
        <taxon>rosids</taxon>
        <taxon>malvids</taxon>
        <taxon>Brassicales</taxon>
        <taxon>Brassicaceae</taxon>
        <taxon>Camelineae</taxon>
        <taxon>Arabidopsis</taxon>
    </lineage>
</organism>
<gene>
    <name type="primary">PCMP-E84</name>
    <name type="ordered locus">At3g49740</name>
    <name type="ORF">T16K5.90</name>
</gene>
<proteinExistence type="evidence at transcript level"/>
<feature type="chain" id="PRO_0000356135" description="Pentatricopeptide repeat-containing protein At3g49740">
    <location>
        <begin position="1"/>
        <end position="737"/>
    </location>
</feature>
<feature type="repeat" description="PPR 1">
    <location>
        <begin position="20"/>
        <end position="55"/>
    </location>
</feature>
<feature type="repeat" description="PPR 2">
    <location>
        <begin position="56"/>
        <end position="90"/>
    </location>
</feature>
<feature type="repeat" description="PPR 3">
    <location>
        <begin position="91"/>
        <end position="121"/>
    </location>
</feature>
<feature type="repeat" description="PPR 4">
    <location>
        <begin position="122"/>
        <end position="152"/>
    </location>
</feature>
<feature type="repeat" description="PPR 5">
    <location>
        <begin position="154"/>
        <end position="188"/>
    </location>
</feature>
<feature type="repeat" description="PPR 6">
    <location>
        <begin position="189"/>
        <end position="222"/>
    </location>
</feature>
<feature type="repeat" description="PPR 7">
    <location>
        <begin position="223"/>
        <end position="253"/>
    </location>
</feature>
<feature type="repeat" description="PPR 8">
    <location>
        <begin position="256"/>
        <end position="289"/>
    </location>
</feature>
<feature type="repeat" description="PPR 9">
    <location>
        <begin position="290"/>
        <end position="321"/>
    </location>
</feature>
<feature type="repeat" description="PPR 10">
    <location>
        <begin position="322"/>
        <end position="352"/>
    </location>
</feature>
<feature type="repeat" description="PPR 11">
    <location>
        <begin position="353"/>
        <end position="387"/>
    </location>
</feature>
<feature type="repeat" description="PPR 12">
    <location>
        <begin position="388"/>
        <end position="418"/>
    </location>
</feature>
<feature type="repeat" description="PPR 13">
    <location>
        <begin position="420"/>
        <end position="454"/>
    </location>
</feature>
<feature type="repeat" description="PPR 14">
    <location>
        <begin position="455"/>
        <end position="485"/>
    </location>
</feature>
<feature type="repeat" description="PPR 15">
    <location>
        <begin position="488"/>
        <end position="522"/>
    </location>
</feature>
<feature type="repeat" description="PPR 16">
    <location>
        <begin position="523"/>
        <end position="553"/>
    </location>
</feature>
<feature type="repeat" description="PPR 17">
    <location>
        <begin position="554"/>
        <end position="588"/>
    </location>
</feature>
<feature type="repeat" description="PPR 18">
    <location>
        <begin position="590"/>
        <end position="620"/>
    </location>
</feature>
<feature type="repeat" description="PPR 19">
    <location>
        <begin position="626"/>
        <end position="656"/>
    </location>
</feature>
<feature type="region of interest" description="Type E motif; degenerate">
    <location>
        <begin position="663"/>
        <end position="737"/>
    </location>
</feature>
<name>PP276_ARATH</name>
<sequence length="737" mass="82013">MRKALCLTESLSAIAENSTTLLNLNRRLTGLTRSGENRNALKLFADVHRCTTLRPDQYSVSLAITTARHLRDTIFGGQVHCYAIRSGLLCHSHVSNTLLSLYERLGNLASLKKKFDEIDEPDVYSWTTLLSASFKLGDIEYAFEVFDKMPERDDVAIWNAMITGCKESGYHETSVELFREMHKLGVRHDKFGFATILSMCDYGSLDFGKQVHSLVIKAGFFIASSVVNALITMYFNCQVVVDACLVFEETDVAVRDQVTFNVVIDGLAGFKRDESLLVFRKMLEASLRPTDLTFVSVMGSCSCAAMGHQVHGLAIKTGYEKYTLVSNATMTMYSSFEDFGAAHKVFESLEEKDLVTWNTMISSYNQAKLGKSAMSVYKRMHIIGVKPDEFTFGSLLATSLDLDVLEMVQACIIKFGLSSKIEISNALISAYSKNGQIEKADLLFERSLRKNLISWNAIISGFYHNGFPFEGLERFSCLLESEVRILPDAYTLSTLLSICVSTSSLMLGSQTHAYVLRHGQFKETLIGNALINMYSQCGTIQNSLEVFNQMSEKDVVSWNSLISAYSRHGEGENAVNTYKTMQDEGKVIPDAATFSAVLSACSHAGLVEEGLEIFNSMVEFHGVIRNVDHFSCLVDLLGRAGHLDEAESLVKISEKTIGSRVDVWWALFSACAAHGDLKLGKMVAKLLMEKEKDDPSVYVQLSNIYAGAGMWKEAEETRRAINMIGAMKQRGCSWMRL</sequence>
<accession>Q9M2Y4</accession>
<protein>
    <recommendedName>
        <fullName>Pentatricopeptide repeat-containing protein At3g49740</fullName>
    </recommendedName>
</protein>